<sequence length="327" mass="36785">MSHLAELVASAKAAINEASDVAALDNVRVEYLGKKGHLTLQMTTLRELPPEERPAAGAVINEAKEQVQQALNARKADLEGAALNARLAAETIDVSLPGRRIENGGLHPVTRTIDRIESFFGELGFTVATGPEIEDDYHNFDALNIPGHHPARADHDTFWFDATRLLRTQTSGVQIRTMENQQPPIRIIAPGRVYRNDYDQTHTPMFHQMEGLIVDKNISFTNLKGTLHDFLNNFFEEDLQVRFRPSYFPFTEPSAEVDVMGKNGKWLEVLGCGMVHPNVLRNVGIDPEVYSGFAFGMGMERLTMLRYGVTDLRAFFENDLRFLKQFK</sequence>
<comment type="catalytic activity">
    <reaction evidence="1">
        <text>tRNA(Phe) + L-phenylalanine + ATP = L-phenylalanyl-tRNA(Phe) + AMP + diphosphate + H(+)</text>
        <dbReference type="Rhea" id="RHEA:19413"/>
        <dbReference type="Rhea" id="RHEA-COMP:9668"/>
        <dbReference type="Rhea" id="RHEA-COMP:9699"/>
        <dbReference type="ChEBI" id="CHEBI:15378"/>
        <dbReference type="ChEBI" id="CHEBI:30616"/>
        <dbReference type="ChEBI" id="CHEBI:33019"/>
        <dbReference type="ChEBI" id="CHEBI:58095"/>
        <dbReference type="ChEBI" id="CHEBI:78442"/>
        <dbReference type="ChEBI" id="CHEBI:78531"/>
        <dbReference type="ChEBI" id="CHEBI:456215"/>
        <dbReference type="EC" id="6.1.1.20"/>
    </reaction>
</comment>
<comment type="cofactor">
    <cofactor evidence="1">
        <name>Mg(2+)</name>
        <dbReference type="ChEBI" id="CHEBI:18420"/>
    </cofactor>
    <text evidence="1">Binds 2 magnesium ions per tetramer.</text>
</comment>
<comment type="subunit">
    <text evidence="1">Tetramer of two alpha and two beta subunits.</text>
</comment>
<comment type="subcellular location">
    <subcellularLocation>
        <location evidence="1">Cytoplasm</location>
    </subcellularLocation>
</comment>
<comment type="similarity">
    <text evidence="1">Belongs to the class-II aminoacyl-tRNA synthetase family. Phe-tRNA synthetase alpha subunit type 1 subfamily.</text>
</comment>
<dbReference type="EC" id="6.1.1.20" evidence="1"/>
<dbReference type="EMBL" id="CP000964">
    <property type="protein sequence ID" value="ACI09484.1"/>
    <property type="molecule type" value="Genomic_DNA"/>
</dbReference>
<dbReference type="SMR" id="B5XQD0"/>
<dbReference type="KEGG" id="kpe:KPK_2142"/>
<dbReference type="HOGENOM" id="CLU_025086_0_1_6"/>
<dbReference type="Proteomes" id="UP000001734">
    <property type="component" value="Chromosome"/>
</dbReference>
<dbReference type="GO" id="GO:0005737">
    <property type="term" value="C:cytoplasm"/>
    <property type="evidence" value="ECO:0007669"/>
    <property type="project" value="UniProtKB-SubCell"/>
</dbReference>
<dbReference type="GO" id="GO:0005524">
    <property type="term" value="F:ATP binding"/>
    <property type="evidence" value="ECO:0007669"/>
    <property type="project" value="UniProtKB-UniRule"/>
</dbReference>
<dbReference type="GO" id="GO:0000287">
    <property type="term" value="F:magnesium ion binding"/>
    <property type="evidence" value="ECO:0007669"/>
    <property type="project" value="UniProtKB-UniRule"/>
</dbReference>
<dbReference type="GO" id="GO:0004826">
    <property type="term" value="F:phenylalanine-tRNA ligase activity"/>
    <property type="evidence" value="ECO:0007669"/>
    <property type="project" value="UniProtKB-UniRule"/>
</dbReference>
<dbReference type="GO" id="GO:0000049">
    <property type="term" value="F:tRNA binding"/>
    <property type="evidence" value="ECO:0007669"/>
    <property type="project" value="InterPro"/>
</dbReference>
<dbReference type="GO" id="GO:0006432">
    <property type="term" value="P:phenylalanyl-tRNA aminoacylation"/>
    <property type="evidence" value="ECO:0007669"/>
    <property type="project" value="UniProtKB-UniRule"/>
</dbReference>
<dbReference type="CDD" id="cd00496">
    <property type="entry name" value="PheRS_alpha_core"/>
    <property type="match status" value="1"/>
</dbReference>
<dbReference type="FunFam" id="3.30.930.10:FF:000003">
    <property type="entry name" value="Phenylalanine--tRNA ligase alpha subunit"/>
    <property type="match status" value="1"/>
</dbReference>
<dbReference type="Gene3D" id="3.30.930.10">
    <property type="entry name" value="Bira Bifunctional Protein, Domain 2"/>
    <property type="match status" value="1"/>
</dbReference>
<dbReference type="HAMAP" id="MF_00281">
    <property type="entry name" value="Phe_tRNA_synth_alpha1"/>
    <property type="match status" value="1"/>
</dbReference>
<dbReference type="InterPro" id="IPR006195">
    <property type="entry name" value="aa-tRNA-synth_II"/>
</dbReference>
<dbReference type="InterPro" id="IPR045864">
    <property type="entry name" value="aa-tRNA-synth_II/BPL/LPL"/>
</dbReference>
<dbReference type="InterPro" id="IPR004529">
    <property type="entry name" value="Phe-tRNA-synth_IIc_asu"/>
</dbReference>
<dbReference type="InterPro" id="IPR004188">
    <property type="entry name" value="Phe-tRNA_ligase_II_N"/>
</dbReference>
<dbReference type="InterPro" id="IPR022911">
    <property type="entry name" value="Phe_tRNA_ligase_alpha1_bac"/>
</dbReference>
<dbReference type="InterPro" id="IPR002319">
    <property type="entry name" value="Phenylalanyl-tRNA_Synthase"/>
</dbReference>
<dbReference type="InterPro" id="IPR010978">
    <property type="entry name" value="tRNA-bd_arm"/>
</dbReference>
<dbReference type="NCBIfam" id="TIGR00468">
    <property type="entry name" value="pheS"/>
    <property type="match status" value="1"/>
</dbReference>
<dbReference type="PANTHER" id="PTHR11538:SF41">
    <property type="entry name" value="PHENYLALANINE--TRNA LIGASE, MITOCHONDRIAL"/>
    <property type="match status" value="1"/>
</dbReference>
<dbReference type="PANTHER" id="PTHR11538">
    <property type="entry name" value="PHENYLALANYL-TRNA SYNTHETASE"/>
    <property type="match status" value="1"/>
</dbReference>
<dbReference type="Pfam" id="PF02912">
    <property type="entry name" value="Phe_tRNA-synt_N"/>
    <property type="match status" value="1"/>
</dbReference>
<dbReference type="Pfam" id="PF01409">
    <property type="entry name" value="tRNA-synt_2d"/>
    <property type="match status" value="1"/>
</dbReference>
<dbReference type="SUPFAM" id="SSF55681">
    <property type="entry name" value="Class II aaRS and biotin synthetases"/>
    <property type="match status" value="1"/>
</dbReference>
<dbReference type="SUPFAM" id="SSF46589">
    <property type="entry name" value="tRNA-binding arm"/>
    <property type="match status" value="1"/>
</dbReference>
<dbReference type="PROSITE" id="PS50862">
    <property type="entry name" value="AA_TRNA_LIGASE_II"/>
    <property type="match status" value="1"/>
</dbReference>
<accession>B5XQD0</accession>
<keyword id="KW-0030">Aminoacyl-tRNA synthetase</keyword>
<keyword id="KW-0067">ATP-binding</keyword>
<keyword id="KW-0963">Cytoplasm</keyword>
<keyword id="KW-0436">Ligase</keyword>
<keyword id="KW-0460">Magnesium</keyword>
<keyword id="KW-0479">Metal-binding</keyword>
<keyword id="KW-0547">Nucleotide-binding</keyword>
<keyword id="KW-0648">Protein biosynthesis</keyword>
<feature type="chain" id="PRO_1000114883" description="Phenylalanine--tRNA ligase alpha subunit">
    <location>
        <begin position="1"/>
        <end position="327"/>
    </location>
</feature>
<feature type="binding site" evidence="1">
    <location>
        <position position="252"/>
    </location>
    <ligand>
        <name>Mg(2+)</name>
        <dbReference type="ChEBI" id="CHEBI:18420"/>
        <note>shared with beta subunit</note>
    </ligand>
</feature>
<evidence type="ECO:0000255" key="1">
    <source>
        <dbReference type="HAMAP-Rule" id="MF_00281"/>
    </source>
</evidence>
<name>SYFA_KLEP3</name>
<gene>
    <name evidence="1" type="primary">pheS</name>
    <name type="ordered locus">KPK_2142</name>
</gene>
<reference key="1">
    <citation type="journal article" date="2008" name="PLoS Genet.">
        <title>Complete genome sequence of the N2-fixing broad host range endophyte Klebsiella pneumoniae 342 and virulence predictions verified in mice.</title>
        <authorList>
            <person name="Fouts D.E."/>
            <person name="Tyler H.L."/>
            <person name="DeBoy R.T."/>
            <person name="Daugherty S."/>
            <person name="Ren Q."/>
            <person name="Badger J.H."/>
            <person name="Durkin A.S."/>
            <person name="Huot H."/>
            <person name="Shrivastava S."/>
            <person name="Kothari S."/>
            <person name="Dodson R.J."/>
            <person name="Mohamoud Y."/>
            <person name="Khouri H."/>
            <person name="Roesch L.F.W."/>
            <person name="Krogfelt K.A."/>
            <person name="Struve C."/>
            <person name="Triplett E.W."/>
            <person name="Methe B.A."/>
        </authorList>
    </citation>
    <scope>NUCLEOTIDE SEQUENCE [LARGE SCALE GENOMIC DNA]</scope>
    <source>
        <strain>342</strain>
    </source>
</reference>
<proteinExistence type="inferred from homology"/>
<protein>
    <recommendedName>
        <fullName evidence="1">Phenylalanine--tRNA ligase alpha subunit</fullName>
        <ecNumber evidence="1">6.1.1.20</ecNumber>
    </recommendedName>
    <alternativeName>
        <fullName evidence="1">Phenylalanyl-tRNA synthetase alpha subunit</fullName>
        <shortName evidence="1">PheRS</shortName>
    </alternativeName>
</protein>
<organism>
    <name type="scientific">Klebsiella pneumoniae (strain 342)</name>
    <dbReference type="NCBI Taxonomy" id="507522"/>
    <lineage>
        <taxon>Bacteria</taxon>
        <taxon>Pseudomonadati</taxon>
        <taxon>Pseudomonadota</taxon>
        <taxon>Gammaproteobacteria</taxon>
        <taxon>Enterobacterales</taxon>
        <taxon>Enterobacteriaceae</taxon>
        <taxon>Klebsiella/Raoultella group</taxon>
        <taxon>Klebsiella</taxon>
        <taxon>Klebsiella pneumoniae complex</taxon>
    </lineage>
</organism>